<reference key="1">
    <citation type="submission" date="2007-12" db="EMBL/GenBank/DDBJ databases">
        <title>Brucella suis ATCC 23445 whole genome shotgun sequencing project.</title>
        <authorList>
            <person name="Setubal J.C."/>
            <person name="Bowns C."/>
            <person name="Boyle S."/>
            <person name="Crasta O.R."/>
            <person name="Czar M.J."/>
            <person name="Dharmanolla C."/>
            <person name="Gillespie J.J."/>
            <person name="Kenyon R.W."/>
            <person name="Lu J."/>
            <person name="Mane S."/>
            <person name="Mohapatra S."/>
            <person name="Nagrani S."/>
            <person name="Purkayastha A."/>
            <person name="Rajasimha H.K."/>
            <person name="Shallom J.M."/>
            <person name="Shallom S."/>
            <person name="Shukla M."/>
            <person name="Snyder E.E."/>
            <person name="Sobral B.W."/>
            <person name="Wattam A.R."/>
            <person name="Will R."/>
            <person name="Williams K."/>
            <person name="Yoo H."/>
            <person name="Bruce D."/>
            <person name="Detter C."/>
            <person name="Munk C."/>
            <person name="Brettin T.S."/>
        </authorList>
    </citation>
    <scope>NUCLEOTIDE SEQUENCE [LARGE SCALE GENOMIC DNA]</scope>
    <source>
        <strain>ATCC 23445 / NCTC 10510</strain>
    </source>
</reference>
<keyword id="KW-0687">Ribonucleoprotein</keyword>
<keyword id="KW-0689">Ribosomal protein</keyword>
<proteinExistence type="inferred from homology"/>
<protein>
    <recommendedName>
        <fullName evidence="1">Large ribosomal subunit protein bL19</fullName>
    </recommendedName>
    <alternativeName>
        <fullName evidence="2">50S ribosomal protein L19</fullName>
    </alternativeName>
</protein>
<dbReference type="EMBL" id="CP000911">
    <property type="protein sequence ID" value="ABY38764.1"/>
    <property type="molecule type" value="Genomic_DNA"/>
</dbReference>
<dbReference type="RefSeq" id="WP_002964975.1">
    <property type="nucleotide sequence ID" value="NC_010169.1"/>
</dbReference>
<dbReference type="SMR" id="B0CIF8"/>
<dbReference type="GeneID" id="97534805"/>
<dbReference type="KEGG" id="bmt:BSUIS_A1747"/>
<dbReference type="HOGENOM" id="CLU_103507_0_2_5"/>
<dbReference type="PRO" id="PR:B0CIF8"/>
<dbReference type="Proteomes" id="UP000008545">
    <property type="component" value="Chromosome I"/>
</dbReference>
<dbReference type="GO" id="GO:0022625">
    <property type="term" value="C:cytosolic large ribosomal subunit"/>
    <property type="evidence" value="ECO:0007669"/>
    <property type="project" value="TreeGrafter"/>
</dbReference>
<dbReference type="GO" id="GO:0003735">
    <property type="term" value="F:structural constituent of ribosome"/>
    <property type="evidence" value="ECO:0007669"/>
    <property type="project" value="InterPro"/>
</dbReference>
<dbReference type="GO" id="GO:0006412">
    <property type="term" value="P:translation"/>
    <property type="evidence" value="ECO:0007669"/>
    <property type="project" value="UniProtKB-UniRule"/>
</dbReference>
<dbReference type="FunFam" id="2.30.30.790:FF:000001">
    <property type="entry name" value="50S ribosomal protein L19"/>
    <property type="match status" value="1"/>
</dbReference>
<dbReference type="Gene3D" id="2.30.30.790">
    <property type="match status" value="1"/>
</dbReference>
<dbReference type="HAMAP" id="MF_00402">
    <property type="entry name" value="Ribosomal_bL19"/>
    <property type="match status" value="1"/>
</dbReference>
<dbReference type="InterPro" id="IPR001857">
    <property type="entry name" value="Ribosomal_bL19"/>
</dbReference>
<dbReference type="InterPro" id="IPR018257">
    <property type="entry name" value="Ribosomal_bL19_CS"/>
</dbReference>
<dbReference type="InterPro" id="IPR038657">
    <property type="entry name" value="Ribosomal_bL19_sf"/>
</dbReference>
<dbReference type="InterPro" id="IPR008991">
    <property type="entry name" value="Translation_prot_SH3-like_sf"/>
</dbReference>
<dbReference type="NCBIfam" id="TIGR01024">
    <property type="entry name" value="rplS_bact"/>
    <property type="match status" value="1"/>
</dbReference>
<dbReference type="PANTHER" id="PTHR15680:SF9">
    <property type="entry name" value="LARGE RIBOSOMAL SUBUNIT PROTEIN BL19M"/>
    <property type="match status" value="1"/>
</dbReference>
<dbReference type="PANTHER" id="PTHR15680">
    <property type="entry name" value="RIBOSOMAL PROTEIN L19"/>
    <property type="match status" value="1"/>
</dbReference>
<dbReference type="Pfam" id="PF01245">
    <property type="entry name" value="Ribosomal_L19"/>
    <property type="match status" value="1"/>
</dbReference>
<dbReference type="PIRSF" id="PIRSF002191">
    <property type="entry name" value="Ribosomal_L19"/>
    <property type="match status" value="1"/>
</dbReference>
<dbReference type="PRINTS" id="PR00061">
    <property type="entry name" value="RIBOSOMALL19"/>
</dbReference>
<dbReference type="SUPFAM" id="SSF50104">
    <property type="entry name" value="Translation proteins SH3-like domain"/>
    <property type="match status" value="1"/>
</dbReference>
<dbReference type="PROSITE" id="PS01015">
    <property type="entry name" value="RIBOSOMAL_L19"/>
    <property type="match status" value="1"/>
</dbReference>
<feature type="chain" id="PRO_1000080339" description="Large ribosomal subunit protein bL19">
    <location>
        <begin position="1"/>
        <end position="145"/>
    </location>
</feature>
<name>RL19_BRUSI</name>
<evidence type="ECO:0000255" key="1">
    <source>
        <dbReference type="HAMAP-Rule" id="MF_00402"/>
    </source>
</evidence>
<evidence type="ECO:0000305" key="2"/>
<organism>
    <name type="scientific">Brucella suis (strain ATCC 23445 / NCTC 10510)</name>
    <dbReference type="NCBI Taxonomy" id="470137"/>
    <lineage>
        <taxon>Bacteria</taxon>
        <taxon>Pseudomonadati</taxon>
        <taxon>Pseudomonadota</taxon>
        <taxon>Alphaproteobacteria</taxon>
        <taxon>Hyphomicrobiales</taxon>
        <taxon>Brucellaceae</taxon>
        <taxon>Brucella/Ochrobactrum group</taxon>
        <taxon>Brucella</taxon>
    </lineage>
</organism>
<accession>B0CIF8</accession>
<gene>
    <name evidence="1" type="primary">rplS</name>
    <name type="ordered locus">BSUIS_A1747</name>
</gene>
<sequence length="145" mass="16077">MTDIIRQLEAEQAAKIEEKRKLPDFQPGDTVRVQVRVTEGTRTRVQAYEGVCIARSGAGLNENFTVRKISYGEGVERVFPVYSPIVEGVEVVRRGKVRRAKLYYLRGLTGKAARIAEKKDNRTKAERAADKLAAAKAEAAKTAAE</sequence>
<comment type="function">
    <text evidence="1">This protein is located at the 30S-50S ribosomal subunit interface and may play a role in the structure and function of the aminoacyl-tRNA binding site.</text>
</comment>
<comment type="similarity">
    <text evidence="1">Belongs to the bacterial ribosomal protein bL19 family.</text>
</comment>